<dbReference type="EMBL" id="AB088787">
    <property type="protein sequence ID" value="BAD20581.1"/>
    <property type="molecule type" value="Genomic_DNA"/>
</dbReference>
<dbReference type="GO" id="GO:0009507">
    <property type="term" value="C:chloroplast"/>
    <property type="evidence" value="ECO:0007669"/>
    <property type="project" value="UniProtKB-SubCell"/>
</dbReference>
<dbReference type="GO" id="GO:0003723">
    <property type="term" value="F:RNA binding"/>
    <property type="evidence" value="ECO:0007669"/>
    <property type="project" value="UniProtKB-KW"/>
</dbReference>
<dbReference type="GO" id="GO:0006397">
    <property type="term" value="P:mRNA processing"/>
    <property type="evidence" value="ECO:0007669"/>
    <property type="project" value="UniProtKB-KW"/>
</dbReference>
<dbReference type="GO" id="GO:0008380">
    <property type="term" value="P:RNA splicing"/>
    <property type="evidence" value="ECO:0007669"/>
    <property type="project" value="UniProtKB-UniRule"/>
</dbReference>
<dbReference type="GO" id="GO:0008033">
    <property type="term" value="P:tRNA processing"/>
    <property type="evidence" value="ECO:0007669"/>
    <property type="project" value="UniProtKB-KW"/>
</dbReference>
<dbReference type="HAMAP" id="MF_01390">
    <property type="entry name" value="MatK"/>
    <property type="match status" value="1"/>
</dbReference>
<dbReference type="InterPro" id="IPR024937">
    <property type="entry name" value="Domain_X"/>
</dbReference>
<dbReference type="InterPro" id="IPR002866">
    <property type="entry name" value="Maturase_MatK"/>
</dbReference>
<dbReference type="InterPro" id="IPR024942">
    <property type="entry name" value="Maturase_MatK_N"/>
</dbReference>
<dbReference type="PANTHER" id="PTHR34811">
    <property type="entry name" value="MATURASE K"/>
    <property type="match status" value="1"/>
</dbReference>
<dbReference type="PANTHER" id="PTHR34811:SF1">
    <property type="entry name" value="MATURASE K"/>
    <property type="match status" value="1"/>
</dbReference>
<dbReference type="Pfam" id="PF01348">
    <property type="entry name" value="Intron_maturas2"/>
    <property type="match status" value="1"/>
</dbReference>
<dbReference type="Pfam" id="PF01824">
    <property type="entry name" value="MatK_N"/>
    <property type="match status" value="1"/>
</dbReference>
<sequence>MEELQGYLEKGESRQQHFLYPLLFQEYIYALAHDYSLNSSIFYEPMEIFGYDNKSSLALVKRLIIRIYQQNSLISSVNDSNQNRLLWHNHFFYSHFYSQMISESFGILVEIPFSLRLVSYFEEIEISKYXNLRSIHSIFPFLEDKLSHLNYVSDILIPHPIHMEILVQILQCWIQDVPFLHFLQFFLREYHNWNSLLITQKKSIYVFSKENKRLFRLLYNSYAFECEFLFXFIRXQSYYLRXISYGTFLERTHFYGKIEHLQIEHFIFIVVCRNYFHRTLWLFKDSFMHYVRYEGKAILASKGTGTPLLMKKWKYLFFHFWQYYFHFWSQPYRIHISPLSKHSFYFLGYLSSLLRNFLAVRNQMLDNSFLTDTIIKKLDTTVPVILLIGSLSKAKFCTVSGHPISKPIWADLPDSDILDQFGRICKNLSHYHSGSSKKRDLYRIKYILRLSCARTLARKHKSTVRTFLRRLGSGLLEEFFTEEEQVLSLIFPKTTPFILHGSHRERIWYLDIIRINDLVNYS</sequence>
<keyword id="KW-0150">Chloroplast</keyword>
<keyword id="KW-0507">mRNA processing</keyword>
<keyword id="KW-0934">Plastid</keyword>
<keyword id="KW-0694">RNA-binding</keyword>
<keyword id="KW-0819">tRNA processing</keyword>
<feature type="chain" id="PRO_0000143358" description="Maturase K">
    <location>
        <begin position="1"/>
        <end position="522"/>
    </location>
</feature>
<geneLocation type="chloroplast"/>
<comment type="function">
    <text evidence="1">Usually encoded in the trnK tRNA gene intron. Probably assists in splicing its own and other chloroplast group II introns.</text>
</comment>
<comment type="subcellular location">
    <subcellularLocation>
        <location>Plastid</location>
        <location>Chloroplast</location>
    </subcellularLocation>
</comment>
<comment type="similarity">
    <text evidence="1">Belongs to the intron maturase 2 family. MatK subfamily.</text>
</comment>
<reference key="1">
    <citation type="journal article" date="2004" name="J. Plant Res.">
        <title>Molecular phylogeny of monocotyledons inferred from combined analysis of plastid matK and rbcL gene sequences.</title>
        <authorList>
            <person name="Tamura M.N."/>
            <person name="Yamashita J."/>
            <person name="Fuse S."/>
            <person name="Haraguchi M."/>
        </authorList>
    </citation>
    <scope>NUCLEOTIDE SEQUENCE [GENOMIC DNA]</scope>
</reference>
<protein>
    <recommendedName>
        <fullName evidence="1">Maturase K</fullName>
    </recommendedName>
    <alternativeName>
        <fullName evidence="1">Intron maturase</fullName>
    </alternativeName>
</protein>
<evidence type="ECO:0000255" key="1">
    <source>
        <dbReference type="HAMAP-Rule" id="MF_01390"/>
    </source>
</evidence>
<organism>
    <name type="scientific">Dianella ensifolia</name>
    <name type="common">Flax lily</name>
    <name type="synonym">Dracaena ensifolia</name>
    <dbReference type="NCBI Taxonomy" id="13485"/>
    <lineage>
        <taxon>Eukaryota</taxon>
        <taxon>Viridiplantae</taxon>
        <taxon>Streptophyta</taxon>
        <taxon>Embryophyta</taxon>
        <taxon>Tracheophyta</taxon>
        <taxon>Spermatophyta</taxon>
        <taxon>Magnoliopsida</taxon>
        <taxon>Liliopsida</taxon>
        <taxon>Asparagales</taxon>
        <taxon>Asphodelaceae</taxon>
        <taxon>Hemerocallidoideae</taxon>
        <taxon>Dianella</taxon>
    </lineage>
</organism>
<accession>Q6LA20</accession>
<gene>
    <name evidence="1" type="primary">matK</name>
</gene>
<name>MATK_DIAEN</name>
<proteinExistence type="inferred from homology"/>